<protein>
    <recommendedName>
        <fullName evidence="4">Cytochrome P450 monooxygenase olcB</fullName>
        <ecNumber evidence="3">1.-.-.-</ecNumber>
    </recommendedName>
    <alternativeName>
        <fullName evidence="4">15-deoxyoxalicine B biosynthesis cluster protein B</fullName>
    </alternativeName>
</protein>
<dbReference type="EC" id="1.-.-.-" evidence="3"/>
<dbReference type="SMR" id="P9WEQ1"/>
<dbReference type="UniPathway" id="UPA00213"/>
<dbReference type="GO" id="GO:0016020">
    <property type="term" value="C:membrane"/>
    <property type="evidence" value="ECO:0007669"/>
    <property type="project" value="UniProtKB-SubCell"/>
</dbReference>
<dbReference type="GO" id="GO:0020037">
    <property type="term" value="F:heme binding"/>
    <property type="evidence" value="ECO:0007669"/>
    <property type="project" value="InterPro"/>
</dbReference>
<dbReference type="GO" id="GO:0005506">
    <property type="term" value="F:iron ion binding"/>
    <property type="evidence" value="ECO:0007669"/>
    <property type="project" value="InterPro"/>
</dbReference>
<dbReference type="GO" id="GO:0004497">
    <property type="term" value="F:monooxygenase activity"/>
    <property type="evidence" value="ECO:0007669"/>
    <property type="project" value="UniProtKB-KW"/>
</dbReference>
<dbReference type="GO" id="GO:0016705">
    <property type="term" value="F:oxidoreductase activity, acting on paired donors, with incorporation or reduction of molecular oxygen"/>
    <property type="evidence" value="ECO:0007669"/>
    <property type="project" value="InterPro"/>
</dbReference>
<dbReference type="GO" id="GO:0043386">
    <property type="term" value="P:mycotoxin biosynthetic process"/>
    <property type="evidence" value="ECO:0007669"/>
    <property type="project" value="UniProtKB-ARBA"/>
</dbReference>
<dbReference type="GO" id="GO:0016114">
    <property type="term" value="P:terpenoid biosynthetic process"/>
    <property type="evidence" value="ECO:0007669"/>
    <property type="project" value="UniProtKB-UniPathway"/>
</dbReference>
<dbReference type="CDD" id="cd11058">
    <property type="entry name" value="CYP60B-like"/>
    <property type="match status" value="1"/>
</dbReference>
<dbReference type="Gene3D" id="1.10.630.10">
    <property type="entry name" value="Cytochrome P450"/>
    <property type="match status" value="1"/>
</dbReference>
<dbReference type="InterPro" id="IPR001128">
    <property type="entry name" value="Cyt_P450"/>
</dbReference>
<dbReference type="InterPro" id="IPR017972">
    <property type="entry name" value="Cyt_P450_CS"/>
</dbReference>
<dbReference type="InterPro" id="IPR002401">
    <property type="entry name" value="Cyt_P450_E_grp-I"/>
</dbReference>
<dbReference type="InterPro" id="IPR036396">
    <property type="entry name" value="Cyt_P450_sf"/>
</dbReference>
<dbReference type="InterPro" id="IPR050121">
    <property type="entry name" value="Cytochrome_P450_monoxygenase"/>
</dbReference>
<dbReference type="PANTHER" id="PTHR24305">
    <property type="entry name" value="CYTOCHROME P450"/>
    <property type="match status" value="1"/>
</dbReference>
<dbReference type="PANTHER" id="PTHR24305:SF230">
    <property type="entry name" value="P450, PUTATIVE (EUROFUNG)-RELATED"/>
    <property type="match status" value="1"/>
</dbReference>
<dbReference type="Pfam" id="PF00067">
    <property type="entry name" value="p450"/>
    <property type="match status" value="1"/>
</dbReference>
<dbReference type="PRINTS" id="PR00463">
    <property type="entry name" value="EP450I"/>
</dbReference>
<dbReference type="PRINTS" id="PR00385">
    <property type="entry name" value="P450"/>
</dbReference>
<dbReference type="SUPFAM" id="SSF48264">
    <property type="entry name" value="Cytochrome P450"/>
    <property type="match status" value="1"/>
</dbReference>
<dbReference type="PROSITE" id="PS00086">
    <property type="entry name" value="CYTOCHROME_P450"/>
    <property type="match status" value="1"/>
</dbReference>
<feature type="chain" id="PRO_0000453886" description="Cytochrome P450 monooxygenase olcB">
    <location>
        <begin position="1"/>
        <end position="491"/>
    </location>
</feature>
<feature type="transmembrane region" description="Helical" evidence="2">
    <location>
        <begin position="5"/>
        <end position="27"/>
    </location>
</feature>
<feature type="binding site" description="axial binding residue" evidence="1">
    <location>
        <position position="435"/>
    </location>
    <ligand>
        <name>heme</name>
        <dbReference type="ChEBI" id="CHEBI:30413"/>
    </ligand>
    <ligandPart>
        <name>Fe</name>
        <dbReference type="ChEBI" id="CHEBI:18248"/>
    </ligandPart>
</feature>
<organism>
    <name type="scientific">Penicillium canescens</name>
    <dbReference type="NCBI Taxonomy" id="5083"/>
    <lineage>
        <taxon>Eukaryota</taxon>
        <taxon>Fungi</taxon>
        <taxon>Dikarya</taxon>
        <taxon>Ascomycota</taxon>
        <taxon>Pezizomycotina</taxon>
        <taxon>Eurotiomycetes</taxon>
        <taxon>Eurotiomycetidae</taxon>
        <taxon>Eurotiales</taxon>
        <taxon>Aspergillaceae</taxon>
        <taxon>Penicillium</taxon>
    </lineage>
</organism>
<evidence type="ECO:0000250" key="1">
    <source>
        <dbReference type="UniProtKB" id="P04798"/>
    </source>
</evidence>
<evidence type="ECO:0000255" key="2"/>
<evidence type="ECO:0000269" key="3">
    <source>
    </source>
</evidence>
<evidence type="ECO:0000303" key="4">
    <source>
    </source>
</evidence>
<evidence type="ECO:0000305" key="5"/>
<evidence type="ECO:0000305" key="6">
    <source>
    </source>
</evidence>
<name>OLCB_PENCN</name>
<reference key="1">
    <citation type="journal article" date="2015" name="Chem. Sci.">
        <title>Genome mining and molecular characterization of the biosynthetic gene cluster of a diterpenic meroterpenoid, 15-deoxyoxalicine B, in Penicillium canescens.</title>
        <authorList>
            <person name="Yaegashi J."/>
            <person name="Romsdahl J."/>
            <person name="Chiang Y.M."/>
            <person name="Wang C.C.C."/>
        </authorList>
    </citation>
    <scope>FUNCTION</scope>
    <scope>DISRUPTION PHENOTYPE</scope>
    <scope>PATHWAY</scope>
</reference>
<reference key="2">
    <citation type="journal article" date="2016" name="Chem. Sci.">
        <title>Correction: Genome mining and molecular characterization of the biosynthetic gene cluster of a diterpenic meroterpenoid, 15-deoxyoxalicine B, in Penicillium canescens.</title>
        <authorList>
            <person name="Yaegashi J."/>
            <person name="Romsdahl J."/>
            <person name="Chiang Y.M."/>
            <person name="Wang C.C.C."/>
        </authorList>
    </citation>
    <scope>ERRATUM OF PUBMED:30090271</scope>
</reference>
<accession>P9WEQ1</accession>
<gene>
    <name evidence="4" type="primary">olcB</name>
</gene>
<sequence>MLNLLLLSLSVCLLYVFITAFWNLYIHPLHHIPGPRQWIAFPILRHLSAIRGTLDSDLRRWHFRYGSAVRFGPDEASFITAEAWKDIYGSTRPQLPRVISSGSNTSDIINANDANHARYRKALAHAFSTNGVRDQEPLVIDYIVKLVGRLKEVAESKLPTDMVKWYKLTTFDMIGDLAFGEHFGGLEKSEYHHWVATVGRFTRIIPFLKIMDAYPVLFKVFLAVMPQSFWKAQAEQAEYTKLTVQKRLNSSIAQDRPDFMDSMLRHRNEKDKLSEHELESNASVLVLAGSETPADLLSGVTYWLLKTPEALEKATGEVRSLMKAESEITFSSVEARLPYLLACVNEGLRLYPSLPGELQRMSPDTPMKISGYDIPPRTRVSVHQYAAYSSPTNFHDPDRFIPERWLPEAKTNPSSPYLFDNREVFQPFSVGPRGCIGKSLAYPLMRTIIARVLWNFDFDLCEESRSWHIQKTFGLWEKPPLICKLTQRKQS</sequence>
<proteinExistence type="inferred from homology"/>
<keyword id="KW-0349">Heme</keyword>
<keyword id="KW-0408">Iron</keyword>
<keyword id="KW-0472">Membrane</keyword>
<keyword id="KW-0479">Metal-binding</keyword>
<keyword id="KW-0503">Monooxygenase</keyword>
<keyword id="KW-0560">Oxidoreductase</keyword>
<keyword id="KW-0812">Transmembrane</keyword>
<keyword id="KW-1133">Transmembrane helix</keyword>
<comment type="function">
    <text evidence="3 6">Cytochrome P450 monooxygenase; part of the gene cluster that mediates the biosynthesis of 15-deoxyoxalicine B (PubMed:30090271). The first step of the pathway is the synthesis of nicotinyl-CoA from nicotinic acid by the nicotinic acid-CoA ligase olcI (PubMed:30090271). Nicotinyl-CoA is then a substrate of polyketide synthase olcA to produce 4-hydroxy-6-(3-pyridinyl)-2H-pyran-2-one (HPPO) which is further prenylated by the polyprenyl transferase olcH to yield geranylgeranyl-HPPO (PubMed:30090271). Geranylgeranyl pyrophosphate is provided by the cluster-specific geranylgeranyl pyrophosphate synthase olcC (PubMed:30090271). The FAD-dependent monooxygenase olcE catalyzes the epoxidation of geranylgeranyl-HPPO and the terpene cyclase olcD catalyzes the cyclization of the terpenoid component, resulting in the formation of the tricyclic terpene moiety seen in predecaturin E (PubMed:30090271). The cytochrome P450 monooxygenase then catalyzes the allylic oxidation of predecaturin E, which is followed by spirocylization with concomitant loss of one molecule of water to form decaturin E (PubMed:30090271). Decaturin E is the substrate of the cytochrome P450 monooxygenase olcJ which hydroxylates it at the C-29 position to form decaturin F (PubMed:30090271). The short-chain dehydrogenase/reductase olcF may catalyze the oxidation of decaturin F to generate the 29-hydroxyl-27-one intermediate, and subsequent hemiacetal formation probably leads to the formation of decaturin C (Probable). The dioxygenase olcK may be a peroxisomal enzyme that catalyzes the hydroxylation of decaturin C into decaturin A once decaturin C is shuttled into the peroxisome by the MFS transporter olcL (Probable). Finally the cytochrome P450 monooxygenase olcB catalyzes the oxidative rearrangement to yield 15-deoxyoxalicine B (PubMed:30090271). In the absence of olcJ, decaturin E may be shunted to a pathway in which it is oxidized to a ketone, possibly by olcF, to form decaturin D, which undergoes further allylic oxidation to yield decaturin G (PubMed:30090271). Moreover, in the absence of oclK or oclL, oclB can convert decaturin C into 15-deoxyoxalicine A (PubMed:30090271).</text>
</comment>
<comment type="cofactor">
    <cofactor evidence="1">
        <name>heme</name>
        <dbReference type="ChEBI" id="CHEBI:30413"/>
    </cofactor>
</comment>
<comment type="pathway">
    <text evidence="3">Secondary metabolite biosynthesis; terpenoid biosynthesis.</text>
</comment>
<comment type="subcellular location">
    <subcellularLocation>
        <location evidence="2">Membrane</location>
        <topology evidence="2">Single-pass membrane protein</topology>
    </subcellularLocation>
</comment>
<comment type="disruption phenotype">
    <text evidence="3">Abolishes the production of 15-deoxyoxalicine B and accumulates decaturin A.</text>
</comment>
<comment type="miscellaneous">
    <text evidence="3">The 15-deoxyoxalicine B cluster is a rare cluster that contains its own geranylgeranyl pyrophosphate synthase (olcC), in contrast to other related clusters which rely on a FPP/GGPP synthase localized outside of the cluster.</text>
</comment>
<comment type="similarity">
    <text evidence="5">Belongs to the cytochrome P450 family.</text>
</comment>